<accession>P68339</accession>
<accession>P36699</accession>
<protein>
    <recommendedName>
        <fullName>Virion host shutoff protein</fullName>
        <shortName>Vhs</shortName>
        <ecNumber>3.1.27.-</ecNumber>
    </recommendedName>
</protein>
<evidence type="ECO:0000250" key="1"/>
<evidence type="ECO:0000250" key="2">
    <source>
        <dbReference type="UniProtKB" id="P68340"/>
    </source>
</evidence>
<evidence type="ECO:0000256" key="3">
    <source>
        <dbReference type="SAM" id="MobiDB-lite"/>
    </source>
</evidence>
<evidence type="ECO:0000305" key="4"/>
<organism>
    <name type="scientific">Human herpesvirus 2 (strain G)</name>
    <name type="common">HHV-2</name>
    <name type="synonym">Human herpes simplex virus 2</name>
    <dbReference type="NCBI Taxonomy" id="10314"/>
    <lineage>
        <taxon>Viruses</taxon>
        <taxon>Duplodnaviria</taxon>
        <taxon>Heunggongvirae</taxon>
        <taxon>Peploviricota</taxon>
        <taxon>Herviviricetes</taxon>
        <taxon>Herpesvirales</taxon>
        <taxon>Orthoherpesviridae</taxon>
        <taxon>Alphaherpesvirinae</taxon>
        <taxon>Simplexvirus</taxon>
        <taxon>Simplexvirus humanalpha2</taxon>
        <taxon>Human herpesvirus 2</taxon>
    </lineage>
</organism>
<comment type="function">
    <text evidence="1 2">Minor structural protein that acts as an endoribonuclease during lytic infection. Degrades host mRNAs in the cytoplasm by cutting them at preferred sites, including some in regions of translation initiation. Together with inhibition of host splicing by ICP27, contributes to an overall decrease in host protein synthesis. Also, after the onset of viral transcription, accelerates the turnover of viral mRNA, thereby facilitating the sequential expression of different classes of viral genes. Binds translation initiation factors eIF4H, eIF4AI, and eIF4AII, thereby may interact directly with the translation initiation complex and thus digest specifically mRNAs. Also impedes antigen presentation by major histocompatibility complex class I and class II molecules, inhibits secretion of cytokines that would otherwise recruit lymphocytes and neutrophils cells to the site of infection and blocks the activation of dendritic cells. Impedes the alpha/beta interferon-mediated response to infection (By similarity). Inhibits the integrated stress response (ISR) in the infected cell, this function requires the endonuclease activity. Stress granule formation is thus inhibited, which allows protein synthesis and viral replication (By similarity).</text>
</comment>
<comment type="subunit">
    <text evidence="1">Interacts with human EIF4H, EIF4A1 and EIF4A2; interaction with eIF4AI and EIF4A2 presumably allows Vhs protein to associate with the eIF4F cap-binding complex.</text>
</comment>
<comment type="subcellular location">
    <subcellularLocation>
        <location evidence="2">Virion</location>
    </subcellularLocation>
</comment>
<comment type="similarity">
    <text evidence="4">Belongs to the herpesviridae VHS protein family.</text>
</comment>
<name>SHUT_HHV2G</name>
<sequence length="492" mass="55244">MGLFGMMKFAQTHHLVKRRGLRAPEGYFTPIAVDLWNVMYTLVVKYQRRYPSYDREAITLHCLCSMLRVFTQKSLFPIFVTDRGVECTEPVVFGAKAILARTTAQCRTDEEASDVDASPPPSPITDSRPSFAFSNMRRRGHAFAPGDRGTRAAGPGPAAPSGAPSKPALRLAHLFCIRVLRALGYAYINSGQLEADDACANLYHTNTVAYVHTTDTDLLLMGCDIVLDISTGYIPTIHCRDLLQYFKMSYPQFLALFVRCHTDLHPNNTYASVEDVLRECHWTAPSRSQARRAARRERANSRSLESMPTLTAAPVGLETRISWTEILAQQIAGEDDYEEDPPLQPPDVAGGPRDGARSSSSEILTPPELVQVPNAQRVAEHRGYVAGRRRHVIHDAPEALDWLPDPMTIAELVEHRYVKYVISLISPKERGPWTLLKRLPIYQDLRDEDLARSIVTRHITAPDIADRFLAQLWAHAPPPAFYKDVLAKFWDE</sequence>
<dbReference type="EC" id="3.1.27.-"/>
<dbReference type="EMBL" id="D00870">
    <property type="protein sequence ID" value="BAA00747.1"/>
    <property type="molecule type" value="Genomic_DNA"/>
</dbReference>
<dbReference type="PIR" id="A35354">
    <property type="entry name" value="A35354"/>
</dbReference>
<dbReference type="RefSeq" id="YP_009137193.1">
    <property type="nucleotide sequence ID" value="NC_001798.2"/>
</dbReference>
<dbReference type="DNASU" id="1487328"/>
<dbReference type="GeneID" id="1487328"/>
<dbReference type="KEGG" id="vg:1487328"/>
<dbReference type="GO" id="GO:0044423">
    <property type="term" value="C:virion component"/>
    <property type="evidence" value="ECO:0007669"/>
    <property type="project" value="UniProtKB-KW"/>
</dbReference>
<dbReference type="GO" id="GO:0004519">
    <property type="term" value="F:endonuclease activity"/>
    <property type="evidence" value="ECO:0007669"/>
    <property type="project" value="UniProtKB-KW"/>
</dbReference>
<dbReference type="GO" id="GO:0003723">
    <property type="term" value="F:RNA binding"/>
    <property type="evidence" value="ECO:0007669"/>
    <property type="project" value="UniProtKB-KW"/>
</dbReference>
<dbReference type="GO" id="GO:0039595">
    <property type="term" value="P:symbiont-mediated degradation of host mRNA"/>
    <property type="evidence" value="ECO:0007669"/>
    <property type="project" value="UniProtKB-KW"/>
</dbReference>
<dbReference type="GO" id="GO:0039657">
    <property type="term" value="P:symbiont-mediated suppression of host gene expression"/>
    <property type="evidence" value="ECO:0007669"/>
    <property type="project" value="UniProtKB-KW"/>
</dbReference>
<dbReference type="GO" id="GO:0052170">
    <property type="term" value="P:symbiont-mediated suppression of host innate immune response"/>
    <property type="evidence" value="ECO:0007669"/>
    <property type="project" value="UniProtKB-KW"/>
</dbReference>
<dbReference type="Gene3D" id="3.40.50.1010">
    <property type="entry name" value="5'-nuclease"/>
    <property type="match status" value="1"/>
</dbReference>
<dbReference type="InterPro" id="IPR029060">
    <property type="entry name" value="PIN-like_dom_sf"/>
</dbReference>
<dbReference type="InterPro" id="IPR006086">
    <property type="entry name" value="XPG-I_dom"/>
</dbReference>
<dbReference type="Pfam" id="PF00867">
    <property type="entry name" value="XPG_I"/>
    <property type="match status" value="1"/>
</dbReference>
<dbReference type="SUPFAM" id="SSF88723">
    <property type="entry name" value="PIN domain-like"/>
    <property type="match status" value="1"/>
</dbReference>
<keyword id="KW-1132">Decay of host mRNAs by virus</keyword>
<keyword id="KW-0255">Endonuclease</keyword>
<keyword id="KW-1262">Eukaryotic host gene expression shutoff by virus</keyword>
<keyword id="KW-1190">Host gene expression shutoff by virus</keyword>
<keyword id="KW-1192">Host mRNA suppression by virus</keyword>
<keyword id="KW-0945">Host-virus interaction</keyword>
<keyword id="KW-0378">Hydrolase</keyword>
<keyword id="KW-1090">Inhibition of host innate immune response by virus</keyword>
<keyword id="KW-0922">Interferon antiviral system evasion</keyword>
<keyword id="KW-0426">Late protein</keyword>
<keyword id="KW-0540">Nuclease</keyword>
<keyword id="KW-0694">RNA-binding</keyword>
<keyword id="KW-0899">Viral immunoevasion</keyword>
<keyword id="KW-0946">Virion</keyword>
<organismHost>
    <name type="scientific">Homo sapiens</name>
    <name type="common">Human</name>
    <dbReference type="NCBI Taxonomy" id="9606"/>
</organismHost>
<proteinExistence type="inferred from homology"/>
<feature type="chain" id="PRO_0000116055" description="Virion host shutoff protein">
    <location>
        <begin position="1"/>
        <end position="492"/>
    </location>
</feature>
<feature type="region of interest" description="Disordered" evidence="3">
    <location>
        <begin position="110"/>
        <end position="130"/>
    </location>
</feature>
<feature type="region of interest" description="Disordered" evidence="3">
    <location>
        <begin position="143"/>
        <end position="165"/>
    </location>
</feature>
<feature type="region of interest" description="Disordered" evidence="3">
    <location>
        <begin position="288"/>
        <end position="307"/>
    </location>
</feature>
<feature type="region of interest" description="Disordered" evidence="3">
    <location>
        <begin position="334"/>
        <end position="369"/>
    </location>
</feature>
<feature type="compositionally biased region" description="Low complexity" evidence="3">
    <location>
        <begin position="144"/>
        <end position="165"/>
    </location>
</feature>
<feature type="site" description="Necessary for the endonuclease activity" evidence="2">
    <location>
        <position position="215"/>
    </location>
</feature>
<reference key="1">
    <citation type="journal article" date="1990" name="J. Gen. Virol.">
        <title>Comparative DNA sequence analysis of the host shutoff genes of different strains of herpes simplex virus: type 2 strain HG52 encodes a truncated UL41 product.</title>
        <authorList>
            <person name="Everett R.D."/>
            <person name="Fenwick M.L."/>
        </authorList>
    </citation>
    <scope>NUCLEOTIDE SEQUENCE [GENOMIC DNA]</scope>
</reference>
<gene>
    <name type="primary">UL41</name>
</gene>